<gene>
    <name evidence="1" type="primary">psbF</name>
</gene>
<evidence type="ECO:0000255" key="1">
    <source>
        <dbReference type="HAMAP-Rule" id="MF_00643"/>
    </source>
</evidence>
<sequence length="39" mass="4498">MTIDRTYPIFTVRWLAIHGLAVPTVFFLGSISAMQFIQR</sequence>
<proteinExistence type="inferred from homology"/>
<comment type="function">
    <text evidence="1">This b-type cytochrome is tightly associated with the reaction center of photosystem II (PSII). PSII is a light-driven water:plastoquinone oxidoreductase that uses light energy to abstract electrons from H(2)O, generating O(2) and a proton gradient subsequently used for ATP formation. It consists of a core antenna complex that captures photons, and an electron transfer chain that converts photonic excitation into a charge separation.</text>
</comment>
<comment type="cofactor">
    <cofactor evidence="1">
        <name>heme b</name>
        <dbReference type="ChEBI" id="CHEBI:60344"/>
    </cofactor>
    <text evidence="1">With its partner (PsbE) binds heme. PSII binds additional chlorophylls, carotenoids and specific lipids.</text>
</comment>
<comment type="subunit">
    <text evidence="1">Heterodimer of an alpha subunit and a beta subunit. PSII is composed of 1 copy each of membrane proteins PsbA, PsbB, PsbC, PsbD, PsbE, PsbF, PsbH, PsbI, PsbJ, PsbK, PsbL, PsbM, PsbT, PsbX, PsbY, PsbZ, Psb30/Ycf12, at least 3 peripheral proteins of the oxygen-evolving complex and a large number of cofactors. It forms dimeric complexes.</text>
</comment>
<comment type="subcellular location">
    <subcellularLocation>
        <location evidence="1">Plastid</location>
        <location evidence="1">Chloroplast thylakoid membrane</location>
        <topology evidence="1">Single-pass membrane protein</topology>
    </subcellularLocation>
</comment>
<comment type="similarity">
    <text evidence="1">Belongs to the PsbE/PsbF family.</text>
</comment>
<feature type="chain" id="PRO_0000200372" description="Cytochrome b559 subunit beta">
    <location>
        <begin position="1"/>
        <end position="39"/>
    </location>
</feature>
<feature type="transmembrane region" description="Helical" evidence="1">
    <location>
        <begin position="14"/>
        <end position="30"/>
    </location>
</feature>
<feature type="binding site" description="axial binding residue" evidence="1">
    <location>
        <position position="18"/>
    </location>
    <ligand>
        <name>heme</name>
        <dbReference type="ChEBI" id="CHEBI:30413"/>
        <note>ligand shared with alpha subunit</note>
    </ligand>
    <ligandPart>
        <name>Fe</name>
        <dbReference type="ChEBI" id="CHEBI:18248"/>
    </ligandPart>
</feature>
<name>PSBF_CHAGL</name>
<keyword id="KW-0150">Chloroplast</keyword>
<keyword id="KW-0249">Electron transport</keyword>
<keyword id="KW-0349">Heme</keyword>
<keyword id="KW-0408">Iron</keyword>
<keyword id="KW-0472">Membrane</keyword>
<keyword id="KW-0479">Metal-binding</keyword>
<keyword id="KW-0602">Photosynthesis</keyword>
<keyword id="KW-0604">Photosystem II</keyword>
<keyword id="KW-0934">Plastid</keyword>
<keyword id="KW-0793">Thylakoid</keyword>
<keyword id="KW-0812">Transmembrane</keyword>
<keyword id="KW-1133">Transmembrane helix</keyword>
<keyword id="KW-0813">Transport</keyword>
<geneLocation type="chloroplast"/>
<reference key="1">
    <citation type="journal article" date="2002" name="Proc. Natl. Acad. Sci. U.S.A.">
        <title>The chloroplast and mitochondrial genome sequences of the charophyte Chaetosphaeridium globosum: insights into the timing of the events that restructured organelle DNAs within the green algal lineage that led to land plants.</title>
        <authorList>
            <person name="Turmel M."/>
            <person name="Otis C."/>
            <person name="Lemieux C."/>
        </authorList>
    </citation>
    <scope>NUCLEOTIDE SEQUENCE [LARGE SCALE GENOMIC DNA]</scope>
    <source>
        <strain>M1311</strain>
    </source>
</reference>
<protein>
    <recommendedName>
        <fullName evidence="1">Cytochrome b559 subunit beta</fullName>
    </recommendedName>
    <alternativeName>
        <fullName evidence="1">PSII reaction center subunit VI</fullName>
    </alternativeName>
</protein>
<accession>P60251</accession>
<organism>
    <name type="scientific">Chaetosphaeridium globosum</name>
    <name type="common">Charophycean green alga</name>
    <name type="synonym">Herposteiron globosum</name>
    <dbReference type="NCBI Taxonomy" id="96477"/>
    <lineage>
        <taxon>Eukaryota</taxon>
        <taxon>Viridiplantae</taxon>
        <taxon>Streptophyta</taxon>
        <taxon>Coleochaetophyceae</taxon>
        <taxon>Coleochaetales</taxon>
        <taxon>Chaetosphaeridiaceae</taxon>
        <taxon>Chaetosphaeridium</taxon>
    </lineage>
</organism>
<dbReference type="EMBL" id="AF494278">
    <property type="protein sequence ID" value="AAM96543.1"/>
    <property type="molecule type" value="Genomic_DNA"/>
</dbReference>
<dbReference type="RefSeq" id="NP_683820.1">
    <property type="nucleotide sequence ID" value="NC_004115.1"/>
</dbReference>
<dbReference type="SMR" id="P60251"/>
<dbReference type="GeneID" id="860699"/>
<dbReference type="GO" id="GO:0009535">
    <property type="term" value="C:chloroplast thylakoid membrane"/>
    <property type="evidence" value="ECO:0007669"/>
    <property type="project" value="UniProtKB-SubCell"/>
</dbReference>
<dbReference type="GO" id="GO:0009539">
    <property type="term" value="C:photosystem II reaction center"/>
    <property type="evidence" value="ECO:0007669"/>
    <property type="project" value="InterPro"/>
</dbReference>
<dbReference type="GO" id="GO:0009055">
    <property type="term" value="F:electron transfer activity"/>
    <property type="evidence" value="ECO:0007669"/>
    <property type="project" value="UniProtKB-UniRule"/>
</dbReference>
<dbReference type="GO" id="GO:0020037">
    <property type="term" value="F:heme binding"/>
    <property type="evidence" value="ECO:0007669"/>
    <property type="project" value="InterPro"/>
</dbReference>
<dbReference type="GO" id="GO:0005506">
    <property type="term" value="F:iron ion binding"/>
    <property type="evidence" value="ECO:0007669"/>
    <property type="project" value="UniProtKB-UniRule"/>
</dbReference>
<dbReference type="GO" id="GO:0009767">
    <property type="term" value="P:photosynthetic electron transport chain"/>
    <property type="evidence" value="ECO:0007669"/>
    <property type="project" value="InterPro"/>
</dbReference>
<dbReference type="HAMAP" id="MF_00643">
    <property type="entry name" value="PSII_PsbF"/>
    <property type="match status" value="1"/>
</dbReference>
<dbReference type="InterPro" id="IPR006241">
    <property type="entry name" value="PSII_cyt_b559_bsu"/>
</dbReference>
<dbReference type="InterPro" id="IPR006216">
    <property type="entry name" value="PSII_cyt_b559_CS"/>
</dbReference>
<dbReference type="InterPro" id="IPR013081">
    <property type="entry name" value="PSII_cyt_b559_N"/>
</dbReference>
<dbReference type="NCBIfam" id="TIGR01333">
    <property type="entry name" value="cyt_b559_beta"/>
    <property type="match status" value="1"/>
</dbReference>
<dbReference type="Pfam" id="PF00283">
    <property type="entry name" value="Cytochrom_B559"/>
    <property type="match status" value="1"/>
</dbReference>
<dbReference type="PIRSF" id="PIRSF000037">
    <property type="entry name" value="PsbF"/>
    <property type="match status" value="1"/>
</dbReference>
<dbReference type="SUPFAM" id="SSF161045">
    <property type="entry name" value="Cytochrome b559 subunits"/>
    <property type="match status" value="1"/>
</dbReference>
<dbReference type="PROSITE" id="PS00537">
    <property type="entry name" value="CYTOCHROME_B559"/>
    <property type="match status" value="1"/>
</dbReference>